<feature type="chain" id="PRO_1000164018" description="Regulatory protein RecX">
    <location>
        <begin position="1"/>
        <end position="205"/>
    </location>
</feature>
<keyword id="KW-0963">Cytoplasm</keyword>
<keyword id="KW-1185">Reference proteome</keyword>
<evidence type="ECO:0000255" key="1">
    <source>
        <dbReference type="HAMAP-Rule" id="MF_01114"/>
    </source>
</evidence>
<proteinExistence type="inferred from homology"/>
<gene>
    <name evidence="1" type="primary">recX</name>
    <name type="ordered locus">FMG_0699</name>
</gene>
<dbReference type="EMBL" id="AP008971">
    <property type="protein sequence ID" value="BAG08117.1"/>
    <property type="molecule type" value="Genomic_DNA"/>
</dbReference>
<dbReference type="RefSeq" id="WP_012290572.1">
    <property type="nucleotide sequence ID" value="NC_010376.1"/>
</dbReference>
<dbReference type="SMR" id="B0S177"/>
<dbReference type="STRING" id="334413.FMG_0699"/>
<dbReference type="KEGG" id="fma:FMG_0699"/>
<dbReference type="eggNOG" id="COG2137">
    <property type="taxonomic scope" value="Bacteria"/>
</dbReference>
<dbReference type="HOGENOM" id="CLU_066607_4_1_9"/>
<dbReference type="Proteomes" id="UP000001319">
    <property type="component" value="Chromosome"/>
</dbReference>
<dbReference type="GO" id="GO:0005737">
    <property type="term" value="C:cytoplasm"/>
    <property type="evidence" value="ECO:0007669"/>
    <property type="project" value="UniProtKB-SubCell"/>
</dbReference>
<dbReference type="GO" id="GO:0006282">
    <property type="term" value="P:regulation of DNA repair"/>
    <property type="evidence" value="ECO:0007669"/>
    <property type="project" value="UniProtKB-UniRule"/>
</dbReference>
<dbReference type="Gene3D" id="1.10.10.10">
    <property type="entry name" value="Winged helix-like DNA-binding domain superfamily/Winged helix DNA-binding domain"/>
    <property type="match status" value="3"/>
</dbReference>
<dbReference type="HAMAP" id="MF_01114">
    <property type="entry name" value="RecX"/>
    <property type="match status" value="1"/>
</dbReference>
<dbReference type="InterPro" id="IPR053926">
    <property type="entry name" value="RecX_HTH_1st"/>
</dbReference>
<dbReference type="InterPro" id="IPR053924">
    <property type="entry name" value="RecX_HTH_2nd"/>
</dbReference>
<dbReference type="InterPro" id="IPR053925">
    <property type="entry name" value="RecX_HTH_3rd"/>
</dbReference>
<dbReference type="InterPro" id="IPR003783">
    <property type="entry name" value="Regulatory_RecX"/>
</dbReference>
<dbReference type="InterPro" id="IPR036388">
    <property type="entry name" value="WH-like_DNA-bd_sf"/>
</dbReference>
<dbReference type="PANTHER" id="PTHR33602">
    <property type="entry name" value="REGULATORY PROTEIN RECX FAMILY PROTEIN"/>
    <property type="match status" value="1"/>
</dbReference>
<dbReference type="PANTHER" id="PTHR33602:SF1">
    <property type="entry name" value="REGULATORY PROTEIN RECX FAMILY PROTEIN"/>
    <property type="match status" value="1"/>
</dbReference>
<dbReference type="Pfam" id="PF21982">
    <property type="entry name" value="RecX_HTH1"/>
    <property type="match status" value="1"/>
</dbReference>
<dbReference type="Pfam" id="PF02631">
    <property type="entry name" value="RecX_HTH2"/>
    <property type="match status" value="1"/>
</dbReference>
<dbReference type="Pfam" id="PF21981">
    <property type="entry name" value="RecX_HTH3"/>
    <property type="match status" value="1"/>
</dbReference>
<sequence length="205" mass="24561">MIIQKIEFNDKKDKFVIETDTKESFLLSYNDFEKFKIHNEMIIDDELYAHLLNISKFGEAFDISLNFLSYKLRTEKEIITKLKSKKFSTEIIDDVITKLKNLDLLDDYNYAKIFINDKINLTNYSKRRIINDLYQKGIDKKIYEDYLEEVFGYNMELDKATLIVETKINIWKEKYEGYELKNKIFTFLLQKGFSYDVAKQISGMY</sequence>
<protein>
    <recommendedName>
        <fullName evidence="1">Regulatory protein RecX</fullName>
    </recommendedName>
</protein>
<accession>B0S177</accession>
<name>RECX_FINM2</name>
<organism>
    <name type="scientific">Finegoldia magna (strain ATCC 29328 / DSM 20472 / WAL 2508)</name>
    <name type="common">Peptostreptococcus magnus</name>
    <dbReference type="NCBI Taxonomy" id="334413"/>
    <lineage>
        <taxon>Bacteria</taxon>
        <taxon>Bacillati</taxon>
        <taxon>Bacillota</taxon>
        <taxon>Tissierellia</taxon>
        <taxon>Tissierellales</taxon>
        <taxon>Peptoniphilaceae</taxon>
        <taxon>Finegoldia</taxon>
    </lineage>
</organism>
<reference key="1">
    <citation type="journal article" date="2008" name="DNA Res.">
        <title>Complete genome sequence of Finegoldia magna, an anaerobic opportunistic pathogen.</title>
        <authorList>
            <person name="Goto T."/>
            <person name="Yamashita A."/>
            <person name="Hirakawa H."/>
            <person name="Matsutani M."/>
            <person name="Todo K."/>
            <person name="Ohshima K."/>
            <person name="Toh H."/>
            <person name="Miyamoto K."/>
            <person name="Kuhara S."/>
            <person name="Hattori M."/>
            <person name="Shimizu T."/>
            <person name="Akimoto S."/>
        </authorList>
    </citation>
    <scope>NUCLEOTIDE SEQUENCE [LARGE SCALE GENOMIC DNA]</scope>
    <source>
        <strain>ATCC 29328 / DSM 20472 / WAL 2508</strain>
    </source>
</reference>
<comment type="function">
    <text evidence="1">Modulates RecA activity.</text>
</comment>
<comment type="subcellular location">
    <subcellularLocation>
        <location evidence="1">Cytoplasm</location>
    </subcellularLocation>
</comment>
<comment type="similarity">
    <text evidence="1">Belongs to the RecX family.</text>
</comment>